<name>CYSM_PSESY</name>
<feature type="chain" id="PRO_0000167114" description="Cysteine synthase B">
    <location>
        <begin position="1"/>
        <end position="169" status="greater than"/>
    </location>
</feature>
<feature type="region of interest" description="Disordered" evidence="2">
    <location>
        <begin position="146"/>
        <end position="169"/>
    </location>
</feature>
<feature type="binding site" evidence="1">
    <location>
        <position position="75"/>
    </location>
    <ligand>
        <name>pyridoxal 5'-phosphate</name>
        <dbReference type="ChEBI" id="CHEBI:597326"/>
    </ligand>
</feature>
<feature type="modified residue" description="N6-(pyridoxal phosphate)lysine" evidence="1">
    <location>
        <position position="45"/>
    </location>
</feature>
<feature type="non-terminal residue">
    <location>
        <position position="169"/>
    </location>
</feature>
<proteinExistence type="inferred from homology"/>
<reference key="1">
    <citation type="journal article" date="1992" name="J. Bacteriol.">
        <title>The lemA gene required for pathogenicity of Pseudomonas syringae pv. syringae on bean is a member of a family of two-component regulators.</title>
        <authorList>
            <person name="Hrabak E.M."/>
            <person name="Willis D.K."/>
        </authorList>
    </citation>
    <scope>NUCLEOTIDE SEQUENCE [GENOMIC DNA]</scope>
</reference>
<dbReference type="EC" id="2.5.1.47"/>
<dbReference type="EMBL" id="M80477">
    <property type="protein sequence ID" value="AAA25876.1"/>
    <property type="molecule type" value="Genomic_DNA"/>
</dbReference>
<dbReference type="PIR" id="A41863">
    <property type="entry name" value="A41863"/>
</dbReference>
<dbReference type="SMR" id="P48028"/>
<dbReference type="UniPathway" id="UPA00136">
    <property type="reaction ID" value="UER00200"/>
</dbReference>
<dbReference type="GO" id="GO:0004124">
    <property type="term" value="F:cysteine synthase activity"/>
    <property type="evidence" value="ECO:0007669"/>
    <property type="project" value="UniProtKB-EC"/>
</dbReference>
<dbReference type="GO" id="GO:0006535">
    <property type="term" value="P:cysteine biosynthetic process from serine"/>
    <property type="evidence" value="ECO:0007669"/>
    <property type="project" value="InterPro"/>
</dbReference>
<dbReference type="CDD" id="cd01561">
    <property type="entry name" value="CBS_like"/>
    <property type="match status" value="1"/>
</dbReference>
<dbReference type="FunFam" id="3.40.50.1100:FF:000003">
    <property type="entry name" value="Cystathionine beta-synthase"/>
    <property type="match status" value="1"/>
</dbReference>
<dbReference type="Gene3D" id="3.40.50.1100">
    <property type="match status" value="2"/>
</dbReference>
<dbReference type="InterPro" id="IPR050214">
    <property type="entry name" value="Cys_Synth/Cystath_Beta-Synth"/>
</dbReference>
<dbReference type="InterPro" id="IPR001216">
    <property type="entry name" value="P-phosphate_BS"/>
</dbReference>
<dbReference type="InterPro" id="IPR001926">
    <property type="entry name" value="TrpB-like_PALP"/>
</dbReference>
<dbReference type="InterPro" id="IPR036052">
    <property type="entry name" value="TrpB-like_PALP_sf"/>
</dbReference>
<dbReference type="PANTHER" id="PTHR10314">
    <property type="entry name" value="CYSTATHIONINE BETA-SYNTHASE"/>
    <property type="match status" value="1"/>
</dbReference>
<dbReference type="Pfam" id="PF00291">
    <property type="entry name" value="PALP"/>
    <property type="match status" value="1"/>
</dbReference>
<dbReference type="SUPFAM" id="SSF53686">
    <property type="entry name" value="Tryptophan synthase beta subunit-like PLP-dependent enzymes"/>
    <property type="match status" value="1"/>
</dbReference>
<dbReference type="PROSITE" id="PS00901">
    <property type="entry name" value="CYS_SYNTHASE"/>
    <property type="match status" value="1"/>
</dbReference>
<comment type="catalytic activity">
    <reaction>
        <text>O-acetyl-L-serine + hydrogen sulfide = L-cysteine + acetate</text>
        <dbReference type="Rhea" id="RHEA:14829"/>
        <dbReference type="ChEBI" id="CHEBI:29919"/>
        <dbReference type="ChEBI" id="CHEBI:30089"/>
        <dbReference type="ChEBI" id="CHEBI:35235"/>
        <dbReference type="ChEBI" id="CHEBI:58340"/>
        <dbReference type="EC" id="2.5.1.47"/>
    </reaction>
</comment>
<comment type="cofactor">
    <cofactor>
        <name>pyridoxal 5'-phosphate</name>
        <dbReference type="ChEBI" id="CHEBI:597326"/>
    </cofactor>
</comment>
<comment type="pathway">
    <text>Amino-acid biosynthesis; L-cysteine biosynthesis; L-cysteine from L-serine: step 2/2.</text>
</comment>
<comment type="similarity">
    <text evidence="3">Belongs to the cysteine synthase/cystathionine beta-synthase family.</text>
</comment>
<sequence length="169" mass="18023">MTLQYQTIADCVGNTPLVRLQRMAGNTSNTLLLKLEGNNPAGSVKDRPALSMITRAELRGQIHPGDTLIEATSGNTGIALAMAAAIKGYRMILIMPDNSSAERKAAMTAYGAELISVSKDDGMEGARDLAERMQAEGRGKVLDQFANGDNPEAHYTSTGPEIWRQTGGT</sequence>
<protein>
    <recommendedName>
        <fullName>Cysteine synthase B</fullName>
        <shortName>CSase B</shortName>
        <ecNumber>2.5.1.47</ecNumber>
    </recommendedName>
    <alternativeName>
        <fullName>O-acetylserine (thiol)-lyase B</fullName>
        <shortName>OAS-TL B</shortName>
    </alternativeName>
    <alternativeName>
        <fullName>O-acetylserine sulfhydrylase B</fullName>
    </alternativeName>
</protein>
<keyword id="KW-0028">Amino-acid biosynthesis</keyword>
<keyword id="KW-0198">Cysteine biosynthesis</keyword>
<keyword id="KW-0663">Pyridoxal phosphate</keyword>
<keyword id="KW-0808">Transferase</keyword>
<accession>P48028</accession>
<evidence type="ECO:0000250" key="1"/>
<evidence type="ECO:0000256" key="2">
    <source>
        <dbReference type="SAM" id="MobiDB-lite"/>
    </source>
</evidence>
<evidence type="ECO:0000305" key="3"/>
<gene>
    <name type="primary">cysM</name>
</gene>
<organism>
    <name type="scientific">Pseudomonas syringae pv. syringae</name>
    <dbReference type="NCBI Taxonomy" id="321"/>
    <lineage>
        <taxon>Bacteria</taxon>
        <taxon>Pseudomonadati</taxon>
        <taxon>Pseudomonadota</taxon>
        <taxon>Gammaproteobacteria</taxon>
        <taxon>Pseudomonadales</taxon>
        <taxon>Pseudomonadaceae</taxon>
        <taxon>Pseudomonas</taxon>
        <taxon>Pseudomonas syringae</taxon>
    </lineage>
</organism>